<feature type="chain" id="PRO_1000049725" description="Large ribosomal subunit protein bL19">
    <location>
        <begin position="1"/>
        <end position="119"/>
    </location>
</feature>
<organism>
    <name type="scientific">Psychromonas ingrahamii (strain DSM 17664 / CCUG 51855 / 37)</name>
    <dbReference type="NCBI Taxonomy" id="357804"/>
    <lineage>
        <taxon>Bacteria</taxon>
        <taxon>Pseudomonadati</taxon>
        <taxon>Pseudomonadota</taxon>
        <taxon>Gammaproteobacteria</taxon>
        <taxon>Alteromonadales</taxon>
        <taxon>Psychromonadaceae</taxon>
        <taxon>Psychromonas</taxon>
    </lineage>
</organism>
<keyword id="KW-1185">Reference proteome</keyword>
<keyword id="KW-0687">Ribonucleoprotein</keyword>
<keyword id="KW-0689">Ribosomal protein</keyword>
<reference key="1">
    <citation type="journal article" date="2008" name="BMC Genomics">
        <title>Genomics of an extreme psychrophile, Psychromonas ingrahamii.</title>
        <authorList>
            <person name="Riley M."/>
            <person name="Staley J.T."/>
            <person name="Danchin A."/>
            <person name="Wang T.Z."/>
            <person name="Brettin T.S."/>
            <person name="Hauser L.J."/>
            <person name="Land M.L."/>
            <person name="Thompson L.S."/>
        </authorList>
    </citation>
    <scope>NUCLEOTIDE SEQUENCE [LARGE SCALE GENOMIC DNA]</scope>
    <source>
        <strain>DSM 17664 / CCUG 51855 / 37</strain>
    </source>
</reference>
<comment type="function">
    <text evidence="1">This protein is located at the 30S-50S ribosomal subunit interface and may play a role in the structure and function of the aminoacyl-tRNA binding site.</text>
</comment>
<comment type="similarity">
    <text evidence="1">Belongs to the bacterial ribosomal protein bL19 family.</text>
</comment>
<sequence length="119" mass="13551">MSNIIQAIEKEQMRSDMPKFAPGDTVIVRVRVKEGEKERLQAFEGVVIAKRNRGLHSAFTVRKMSSNGEGVERVFQTHSPIVGSVEVKRRGVVRQAKLYYLRELTGKKARIKEKLGKKK</sequence>
<protein>
    <recommendedName>
        <fullName evidence="1">Large ribosomal subunit protein bL19</fullName>
    </recommendedName>
    <alternativeName>
        <fullName evidence="2">50S ribosomal protein L19</fullName>
    </alternativeName>
</protein>
<dbReference type="EMBL" id="CP000510">
    <property type="protein sequence ID" value="ABM05050.1"/>
    <property type="molecule type" value="Genomic_DNA"/>
</dbReference>
<dbReference type="RefSeq" id="WP_011771602.1">
    <property type="nucleotide sequence ID" value="NC_008709.1"/>
</dbReference>
<dbReference type="SMR" id="A1SZY5"/>
<dbReference type="STRING" id="357804.Ping_3364"/>
<dbReference type="KEGG" id="pin:Ping_3364"/>
<dbReference type="eggNOG" id="COG0335">
    <property type="taxonomic scope" value="Bacteria"/>
</dbReference>
<dbReference type="HOGENOM" id="CLU_103507_2_2_6"/>
<dbReference type="OrthoDB" id="9803541at2"/>
<dbReference type="Proteomes" id="UP000000639">
    <property type="component" value="Chromosome"/>
</dbReference>
<dbReference type="GO" id="GO:0022625">
    <property type="term" value="C:cytosolic large ribosomal subunit"/>
    <property type="evidence" value="ECO:0007669"/>
    <property type="project" value="TreeGrafter"/>
</dbReference>
<dbReference type="GO" id="GO:0003735">
    <property type="term" value="F:structural constituent of ribosome"/>
    <property type="evidence" value="ECO:0007669"/>
    <property type="project" value="InterPro"/>
</dbReference>
<dbReference type="GO" id="GO:0006412">
    <property type="term" value="P:translation"/>
    <property type="evidence" value="ECO:0007669"/>
    <property type="project" value="UniProtKB-UniRule"/>
</dbReference>
<dbReference type="FunFam" id="2.30.30.790:FF:000001">
    <property type="entry name" value="50S ribosomal protein L19"/>
    <property type="match status" value="1"/>
</dbReference>
<dbReference type="Gene3D" id="2.30.30.790">
    <property type="match status" value="1"/>
</dbReference>
<dbReference type="HAMAP" id="MF_00402">
    <property type="entry name" value="Ribosomal_bL19"/>
    <property type="match status" value="1"/>
</dbReference>
<dbReference type="InterPro" id="IPR001857">
    <property type="entry name" value="Ribosomal_bL19"/>
</dbReference>
<dbReference type="InterPro" id="IPR018257">
    <property type="entry name" value="Ribosomal_bL19_CS"/>
</dbReference>
<dbReference type="InterPro" id="IPR038657">
    <property type="entry name" value="Ribosomal_bL19_sf"/>
</dbReference>
<dbReference type="InterPro" id="IPR008991">
    <property type="entry name" value="Translation_prot_SH3-like_sf"/>
</dbReference>
<dbReference type="NCBIfam" id="TIGR01024">
    <property type="entry name" value="rplS_bact"/>
    <property type="match status" value="1"/>
</dbReference>
<dbReference type="PANTHER" id="PTHR15680:SF9">
    <property type="entry name" value="LARGE RIBOSOMAL SUBUNIT PROTEIN BL19M"/>
    <property type="match status" value="1"/>
</dbReference>
<dbReference type="PANTHER" id="PTHR15680">
    <property type="entry name" value="RIBOSOMAL PROTEIN L19"/>
    <property type="match status" value="1"/>
</dbReference>
<dbReference type="Pfam" id="PF01245">
    <property type="entry name" value="Ribosomal_L19"/>
    <property type="match status" value="1"/>
</dbReference>
<dbReference type="PIRSF" id="PIRSF002191">
    <property type="entry name" value="Ribosomal_L19"/>
    <property type="match status" value="1"/>
</dbReference>
<dbReference type="PRINTS" id="PR00061">
    <property type="entry name" value="RIBOSOMALL19"/>
</dbReference>
<dbReference type="SUPFAM" id="SSF50104">
    <property type="entry name" value="Translation proteins SH3-like domain"/>
    <property type="match status" value="1"/>
</dbReference>
<dbReference type="PROSITE" id="PS01015">
    <property type="entry name" value="RIBOSOMAL_L19"/>
    <property type="match status" value="1"/>
</dbReference>
<name>RL19_PSYIN</name>
<proteinExistence type="inferred from homology"/>
<gene>
    <name evidence="1" type="primary">rplS</name>
    <name type="ordered locus">Ping_3364</name>
</gene>
<accession>A1SZY5</accession>
<evidence type="ECO:0000255" key="1">
    <source>
        <dbReference type="HAMAP-Rule" id="MF_00402"/>
    </source>
</evidence>
<evidence type="ECO:0000305" key="2"/>